<evidence type="ECO:0000255" key="1">
    <source>
        <dbReference type="HAMAP-Rule" id="MF_01428"/>
    </source>
</evidence>
<organism>
    <name type="scientific">Bordetella bronchiseptica (strain ATCC BAA-588 / NCTC 13252 / RB50)</name>
    <name type="common">Alcaligenes bronchisepticus</name>
    <dbReference type="NCBI Taxonomy" id="257310"/>
    <lineage>
        <taxon>Bacteria</taxon>
        <taxon>Pseudomonadati</taxon>
        <taxon>Pseudomonadota</taxon>
        <taxon>Betaproteobacteria</taxon>
        <taxon>Burkholderiales</taxon>
        <taxon>Alcaligenaceae</taxon>
        <taxon>Bordetella</taxon>
    </lineage>
</organism>
<protein>
    <recommendedName>
        <fullName evidence="1">Glutamyl-Q tRNA(Asp) synthetase</fullName>
        <shortName evidence="1">Glu-Q-RSs</shortName>
        <ecNumber evidence="1">6.1.1.-</ecNumber>
    </recommendedName>
</protein>
<accession>Q7WDN0</accession>
<comment type="function">
    <text evidence="1">Catalyzes the tRNA-independent activation of glutamate in presence of ATP and the subsequent transfer of glutamate onto a tRNA(Asp). Glutamate is transferred on the 2-amino-5-(4,5-dihydroxy-2-cyclopenten-1-yl) moiety of the queuosine in the wobble position of the QUC anticodon.</text>
</comment>
<comment type="cofactor">
    <cofactor evidence="1">
        <name>Zn(2+)</name>
        <dbReference type="ChEBI" id="CHEBI:29105"/>
    </cofactor>
    <text evidence="1">Binds 1 zinc ion per subunit.</text>
</comment>
<comment type="similarity">
    <text evidence="1">Belongs to the class-I aminoacyl-tRNA synthetase family. GluQ subfamily.</text>
</comment>
<gene>
    <name evidence="1" type="primary">gluQ</name>
    <name type="ordered locus">BB4958</name>
</gene>
<name>GLUQ_BORBR</name>
<keyword id="KW-0030">Aminoacyl-tRNA synthetase</keyword>
<keyword id="KW-0067">ATP-binding</keyword>
<keyword id="KW-0436">Ligase</keyword>
<keyword id="KW-0479">Metal-binding</keyword>
<keyword id="KW-0547">Nucleotide-binding</keyword>
<keyword id="KW-0862">Zinc</keyword>
<proteinExistence type="inferred from homology"/>
<sequence length="319" mass="34464">MARRPVLARHRIDFRNRVNYIGRFAPSPSGPLHAGSLVAALASWLDARAHHGLWRLRIEDVDTPRTVPGAAGVIMDQLRALHLHWDGEIMWQSRRGAAYQQAFDALAARGLIYGCGCTRREIADSALRGTAGVDGERPYPGTCREGLPAGRQARAWRVRVPPGVETFVDRWLGPQQQDVAAAVGDFALRRADGLWAYQLAVVVDDADQGVTDVVRGADLLGSTARQRVLGRLLGLAPPRVMHVPLIVDPATGLKLSKQNGAPALDCSQPLRMLQQAWSGLGFAPLAAATPEAFLQAAAAQWAQRFGMRHAAVPASPKAD</sequence>
<reference key="1">
    <citation type="journal article" date="2003" name="Nat. Genet.">
        <title>Comparative analysis of the genome sequences of Bordetella pertussis, Bordetella parapertussis and Bordetella bronchiseptica.</title>
        <authorList>
            <person name="Parkhill J."/>
            <person name="Sebaihia M."/>
            <person name="Preston A."/>
            <person name="Murphy L.D."/>
            <person name="Thomson N.R."/>
            <person name="Harris D.E."/>
            <person name="Holden M.T.G."/>
            <person name="Churcher C.M."/>
            <person name="Bentley S.D."/>
            <person name="Mungall K.L."/>
            <person name="Cerdeno-Tarraga A.-M."/>
            <person name="Temple L."/>
            <person name="James K.D."/>
            <person name="Harris B."/>
            <person name="Quail M.A."/>
            <person name="Achtman M."/>
            <person name="Atkin R."/>
            <person name="Baker S."/>
            <person name="Basham D."/>
            <person name="Bason N."/>
            <person name="Cherevach I."/>
            <person name="Chillingworth T."/>
            <person name="Collins M."/>
            <person name="Cronin A."/>
            <person name="Davis P."/>
            <person name="Doggett J."/>
            <person name="Feltwell T."/>
            <person name="Goble A."/>
            <person name="Hamlin N."/>
            <person name="Hauser H."/>
            <person name="Holroyd S."/>
            <person name="Jagels K."/>
            <person name="Leather S."/>
            <person name="Moule S."/>
            <person name="Norberczak H."/>
            <person name="O'Neil S."/>
            <person name="Ormond D."/>
            <person name="Price C."/>
            <person name="Rabbinowitsch E."/>
            <person name="Rutter S."/>
            <person name="Sanders M."/>
            <person name="Saunders D."/>
            <person name="Seeger K."/>
            <person name="Sharp S."/>
            <person name="Simmonds M."/>
            <person name="Skelton J."/>
            <person name="Squares R."/>
            <person name="Squares S."/>
            <person name="Stevens K."/>
            <person name="Unwin L."/>
            <person name="Whitehead S."/>
            <person name="Barrell B.G."/>
            <person name="Maskell D.J."/>
        </authorList>
    </citation>
    <scope>NUCLEOTIDE SEQUENCE [LARGE SCALE GENOMIC DNA]</scope>
    <source>
        <strain>ATCC BAA-588 / NCTC 13252 / RB50</strain>
    </source>
</reference>
<feature type="chain" id="PRO_0000208288" description="Glutamyl-Q tRNA(Asp) synthetase">
    <location>
        <begin position="1"/>
        <end position="319"/>
    </location>
</feature>
<feature type="short sequence motif" description="'HIGH' region">
    <location>
        <begin position="26"/>
        <end position="36"/>
    </location>
</feature>
<feature type="short sequence motif" description="'KMSKS' region">
    <location>
        <begin position="254"/>
        <end position="258"/>
    </location>
</feature>
<feature type="binding site" evidence="1">
    <location>
        <begin position="23"/>
        <end position="27"/>
    </location>
    <ligand>
        <name>L-glutamate</name>
        <dbReference type="ChEBI" id="CHEBI:29985"/>
    </ligand>
</feature>
<feature type="binding site" evidence="1">
    <location>
        <position position="59"/>
    </location>
    <ligand>
        <name>L-glutamate</name>
        <dbReference type="ChEBI" id="CHEBI:29985"/>
    </ligand>
</feature>
<feature type="binding site" evidence="1">
    <location>
        <position position="115"/>
    </location>
    <ligand>
        <name>Zn(2+)</name>
        <dbReference type="ChEBI" id="CHEBI:29105"/>
    </ligand>
</feature>
<feature type="binding site" evidence="1">
    <location>
        <position position="117"/>
    </location>
    <ligand>
        <name>Zn(2+)</name>
        <dbReference type="ChEBI" id="CHEBI:29105"/>
    </ligand>
</feature>
<feature type="binding site" evidence="1">
    <location>
        <position position="139"/>
    </location>
    <ligand>
        <name>Zn(2+)</name>
        <dbReference type="ChEBI" id="CHEBI:29105"/>
    </ligand>
</feature>
<feature type="binding site" evidence="1">
    <location>
        <position position="143"/>
    </location>
    <ligand>
        <name>Zn(2+)</name>
        <dbReference type="ChEBI" id="CHEBI:29105"/>
    </ligand>
</feature>
<feature type="binding site" evidence="1">
    <location>
        <position position="197"/>
    </location>
    <ligand>
        <name>L-glutamate</name>
        <dbReference type="ChEBI" id="CHEBI:29985"/>
    </ligand>
</feature>
<feature type="binding site" evidence="1">
    <location>
        <position position="215"/>
    </location>
    <ligand>
        <name>L-glutamate</name>
        <dbReference type="ChEBI" id="CHEBI:29985"/>
    </ligand>
</feature>
<feature type="binding site" evidence="1">
    <location>
        <position position="257"/>
    </location>
    <ligand>
        <name>ATP</name>
        <dbReference type="ChEBI" id="CHEBI:30616"/>
    </ligand>
</feature>
<dbReference type="EC" id="6.1.1.-" evidence="1"/>
<dbReference type="EMBL" id="BX640452">
    <property type="protein sequence ID" value="CAE35322.1"/>
    <property type="molecule type" value="Genomic_DNA"/>
</dbReference>
<dbReference type="SMR" id="Q7WDN0"/>
<dbReference type="KEGG" id="bbr:BB4958"/>
<dbReference type="eggNOG" id="COG0008">
    <property type="taxonomic scope" value="Bacteria"/>
</dbReference>
<dbReference type="HOGENOM" id="CLU_015768_0_1_4"/>
<dbReference type="Proteomes" id="UP000001027">
    <property type="component" value="Chromosome"/>
</dbReference>
<dbReference type="GO" id="GO:0005829">
    <property type="term" value="C:cytosol"/>
    <property type="evidence" value="ECO:0007669"/>
    <property type="project" value="TreeGrafter"/>
</dbReference>
<dbReference type="GO" id="GO:0005524">
    <property type="term" value="F:ATP binding"/>
    <property type="evidence" value="ECO:0007669"/>
    <property type="project" value="UniProtKB-KW"/>
</dbReference>
<dbReference type="GO" id="GO:0004818">
    <property type="term" value="F:glutamate-tRNA ligase activity"/>
    <property type="evidence" value="ECO:0007669"/>
    <property type="project" value="TreeGrafter"/>
</dbReference>
<dbReference type="GO" id="GO:0008270">
    <property type="term" value="F:zinc ion binding"/>
    <property type="evidence" value="ECO:0007669"/>
    <property type="project" value="UniProtKB-UniRule"/>
</dbReference>
<dbReference type="GO" id="GO:0006424">
    <property type="term" value="P:glutamyl-tRNA aminoacylation"/>
    <property type="evidence" value="ECO:0007669"/>
    <property type="project" value="InterPro"/>
</dbReference>
<dbReference type="GO" id="GO:0006400">
    <property type="term" value="P:tRNA modification"/>
    <property type="evidence" value="ECO:0007669"/>
    <property type="project" value="InterPro"/>
</dbReference>
<dbReference type="Gene3D" id="3.40.50.620">
    <property type="entry name" value="HUPs"/>
    <property type="match status" value="1"/>
</dbReference>
<dbReference type="HAMAP" id="MF_01428">
    <property type="entry name" value="Glu_Q_tRNA_synth"/>
    <property type="match status" value="1"/>
</dbReference>
<dbReference type="InterPro" id="IPR022380">
    <property type="entry name" value="Glu-Q_tRNA(Asp)_Synthase"/>
</dbReference>
<dbReference type="InterPro" id="IPR000924">
    <property type="entry name" value="Glu/Gln-tRNA-synth"/>
</dbReference>
<dbReference type="InterPro" id="IPR020058">
    <property type="entry name" value="Glu/Gln-tRNA-synth_Ib_cat-dom"/>
</dbReference>
<dbReference type="InterPro" id="IPR049940">
    <property type="entry name" value="GluQ/Sye"/>
</dbReference>
<dbReference type="InterPro" id="IPR014729">
    <property type="entry name" value="Rossmann-like_a/b/a_fold"/>
</dbReference>
<dbReference type="NCBIfam" id="NF004313">
    <property type="entry name" value="PRK05710.1-2"/>
    <property type="match status" value="1"/>
</dbReference>
<dbReference type="NCBIfam" id="NF004314">
    <property type="entry name" value="PRK05710.1-3"/>
    <property type="match status" value="1"/>
</dbReference>
<dbReference type="NCBIfam" id="TIGR03838">
    <property type="entry name" value="queuosine_YadB"/>
    <property type="match status" value="1"/>
</dbReference>
<dbReference type="PANTHER" id="PTHR43311">
    <property type="entry name" value="GLUTAMATE--TRNA LIGASE"/>
    <property type="match status" value="1"/>
</dbReference>
<dbReference type="PANTHER" id="PTHR43311:SF1">
    <property type="entry name" value="GLUTAMYL-Q TRNA(ASP) SYNTHETASE"/>
    <property type="match status" value="1"/>
</dbReference>
<dbReference type="Pfam" id="PF00749">
    <property type="entry name" value="tRNA-synt_1c"/>
    <property type="match status" value="1"/>
</dbReference>
<dbReference type="PRINTS" id="PR00987">
    <property type="entry name" value="TRNASYNTHGLU"/>
</dbReference>
<dbReference type="SUPFAM" id="SSF52374">
    <property type="entry name" value="Nucleotidylyl transferase"/>
    <property type="match status" value="1"/>
</dbReference>